<comment type="function">
    <text evidence="1">Required for RNA-mediated gene silencing (RNAi). Binds to short RNAs such as microRNAs (miRNAs) and represses the translation of mRNAs which are complementary to them. Lacks endonuclease activity and does not appear to cleave target mRNAs.</text>
</comment>
<comment type="subcellular location">
    <subcellularLocation>
        <location evidence="1">Cytoplasm</location>
        <location evidence="1">P-body</location>
    </subcellularLocation>
</comment>
<comment type="similarity">
    <text evidence="1">Belongs to the argonaute family. Ago subfamily.</text>
</comment>
<name>AGO4_CHICK</name>
<keyword id="KW-0963">Cytoplasm</keyword>
<keyword id="KW-1185">Reference proteome</keyword>
<keyword id="KW-0687">Ribonucleoprotein</keyword>
<keyword id="KW-0694">RNA-binding</keyword>
<keyword id="KW-0943">RNA-mediated gene silencing</keyword>
<keyword id="KW-0810">Translation regulation</keyword>
<organism>
    <name type="scientific">Gallus gallus</name>
    <name type="common">Chicken</name>
    <dbReference type="NCBI Taxonomy" id="9031"/>
    <lineage>
        <taxon>Eukaryota</taxon>
        <taxon>Metazoa</taxon>
        <taxon>Chordata</taxon>
        <taxon>Craniata</taxon>
        <taxon>Vertebrata</taxon>
        <taxon>Euteleostomi</taxon>
        <taxon>Archelosauria</taxon>
        <taxon>Archosauria</taxon>
        <taxon>Dinosauria</taxon>
        <taxon>Saurischia</taxon>
        <taxon>Theropoda</taxon>
        <taxon>Coelurosauria</taxon>
        <taxon>Aves</taxon>
        <taxon>Neognathae</taxon>
        <taxon>Galloanserae</taxon>
        <taxon>Galliformes</taxon>
        <taxon>Phasianidae</taxon>
        <taxon>Phasianinae</taxon>
        <taxon>Gallus</taxon>
    </lineage>
</organism>
<gene>
    <name type="primary">AGO4</name>
    <name type="synonym">EIF2C4</name>
    <name type="ORF">RCJMB04_1a17</name>
</gene>
<sequence>MVRHFKMQIFGDRQPGYDGKRNMYTAHPLPIGRDRVDMEVTLPGEGKDQTFKVSIQWVSVVSLQLLLEALAGHLNEVPEDSVQALDVITRHLPSMRYTPVGRSFFSPPEGYYHPLGGGREVWFGFHQSVRPAMWNMMLNIDVSATAFYRAQPIIEFMCEVLDIQNINEQTKPLTDSQRVKFTKEIRGLKVEVTHCGQMKRKYRVCNVTRRPASHQTFPLQLENGQAMECTVAQYFKQKYSLQLKYPHLPCLQVGQEQKHTYLPLEVCNIVAGQRCIKKLTDNQTSTMIKATARSAPDRQEEISRLVKSNSMVGGPDPYLKEFGIVVHNEMTELTGRVLPAPMLQYGGRNKTVATPNQGVWDMRGKQFYAGIEIKVWAVACFAPQKQCREDLLKSFTDQLRKISKDAGMPIQGQPCFCKYAQGADSVEPMFKHLKLTYVGLQLIVVILPGKTPVYAEVKRVGDTLLGMATQCVQVKNVVKTSPQTLSNLCLKINAKLGGINNVLVPHQRPSVFQQPVIFLGADVTHPPAGDGKKPSIAAVVGSMDGHPSRYCATVRVQTSRQETSQELLYSQEVIQDLTNMVRELLIQFYKSTRFKPTRIIYYRGGVSEGQMKQVAWPELIAIRKACISLEEDYRPGITYIVVQKRHHTRLFCADKTERVGKSGNVPAGTTVDSTITHPSEFDFYLCSHAGIQGTSRPSHYQVLWDDNCFTADELQLLTYQLCHTYVRCTRSVSIPAPAYYARLVAFRARYHLVDKDHDSAEGSHVSGQSNGRDPQALAKAVQIHHDTQHTMYFA</sequence>
<feature type="chain" id="PRO_0000371225" description="Protein argonaute-4">
    <location>
        <begin position="1"/>
        <end position="794"/>
    </location>
</feature>
<feature type="domain" description="PAZ" evidence="2">
    <location>
        <begin position="152"/>
        <end position="271"/>
    </location>
</feature>
<feature type="domain" description="Piwi" evidence="1">
    <location>
        <begin position="442"/>
        <end position="753"/>
    </location>
</feature>
<feature type="region of interest" description="Disordered" evidence="3">
    <location>
        <begin position="758"/>
        <end position="779"/>
    </location>
</feature>
<dbReference type="EMBL" id="AJ719274">
    <property type="protein sequence ID" value="CAG30933.1"/>
    <property type="molecule type" value="mRNA"/>
</dbReference>
<dbReference type="RefSeq" id="NP_001034365.1">
    <property type="nucleotide sequence ID" value="NM_001039276.2"/>
</dbReference>
<dbReference type="RefSeq" id="NP_001383410.1">
    <property type="nucleotide sequence ID" value="NM_001396481.1"/>
</dbReference>
<dbReference type="SMR" id="Q5ZMW0"/>
<dbReference type="FunCoup" id="Q5ZMW0">
    <property type="interactions" value="1426"/>
</dbReference>
<dbReference type="STRING" id="9031.ENSGALP00000058495"/>
<dbReference type="GeneID" id="419629"/>
<dbReference type="KEGG" id="gga:419629"/>
<dbReference type="CTD" id="192670"/>
<dbReference type="VEuPathDB" id="HostDB:geneid_419629"/>
<dbReference type="InParanoid" id="Q5ZMW0"/>
<dbReference type="OMA" id="RVRITHI"/>
<dbReference type="OrthoDB" id="10252740at2759"/>
<dbReference type="PhylomeDB" id="Q5ZMW0"/>
<dbReference type="Reactome" id="R-GGA-203927">
    <property type="pathway name" value="MicroRNA (miRNA) biogenesis"/>
</dbReference>
<dbReference type="Reactome" id="R-GGA-426486">
    <property type="pathway name" value="Small interfering RNA (siRNA) biogenesis"/>
</dbReference>
<dbReference type="Reactome" id="R-GGA-426496">
    <property type="pathway name" value="Post-transcriptional silencing by small RNAs"/>
</dbReference>
<dbReference type="PRO" id="PR:Q5ZMW0"/>
<dbReference type="Proteomes" id="UP000000539">
    <property type="component" value="Chromosome 23"/>
</dbReference>
<dbReference type="Bgee" id="ENSGALG00000039713">
    <property type="expression patterns" value="Expressed in spleen and 12 other cell types or tissues"/>
</dbReference>
<dbReference type="GO" id="GO:0005737">
    <property type="term" value="C:cytoplasm"/>
    <property type="evidence" value="ECO:0000318"/>
    <property type="project" value="GO_Central"/>
</dbReference>
<dbReference type="GO" id="GO:0036464">
    <property type="term" value="C:cytoplasmic ribonucleoprotein granule"/>
    <property type="evidence" value="ECO:0000318"/>
    <property type="project" value="GO_Central"/>
</dbReference>
<dbReference type="GO" id="GO:0005634">
    <property type="term" value="C:nucleus"/>
    <property type="evidence" value="ECO:0000318"/>
    <property type="project" value="GO_Central"/>
</dbReference>
<dbReference type="GO" id="GO:0000932">
    <property type="term" value="C:P-body"/>
    <property type="evidence" value="ECO:0007669"/>
    <property type="project" value="UniProtKB-SubCell"/>
</dbReference>
<dbReference type="GO" id="GO:0016442">
    <property type="term" value="C:RISC complex"/>
    <property type="evidence" value="ECO:0000318"/>
    <property type="project" value="GO_Central"/>
</dbReference>
<dbReference type="GO" id="GO:0035198">
    <property type="term" value="F:miRNA binding"/>
    <property type="evidence" value="ECO:0000318"/>
    <property type="project" value="GO_Central"/>
</dbReference>
<dbReference type="GO" id="GO:0004521">
    <property type="term" value="F:RNA endonuclease activity"/>
    <property type="evidence" value="ECO:0000318"/>
    <property type="project" value="GO_Central"/>
</dbReference>
<dbReference type="GO" id="GO:0003727">
    <property type="term" value="F:single-stranded RNA binding"/>
    <property type="evidence" value="ECO:0000318"/>
    <property type="project" value="GO_Central"/>
</dbReference>
<dbReference type="GO" id="GO:0035278">
    <property type="term" value="P:miRNA-mediated gene silencing by inhibition of translation"/>
    <property type="evidence" value="ECO:0000250"/>
    <property type="project" value="UniProtKB"/>
</dbReference>
<dbReference type="GO" id="GO:0006402">
    <property type="term" value="P:mRNA catabolic process"/>
    <property type="evidence" value="ECO:0000250"/>
    <property type="project" value="UniProtKB"/>
</dbReference>
<dbReference type="GO" id="GO:0031054">
    <property type="term" value="P:pre-miRNA processing"/>
    <property type="evidence" value="ECO:0000318"/>
    <property type="project" value="GO_Central"/>
</dbReference>
<dbReference type="GO" id="GO:0035194">
    <property type="term" value="P:regulatory ncRNA-mediated post-transcriptional gene silencing"/>
    <property type="evidence" value="ECO:0000318"/>
    <property type="project" value="GO_Central"/>
</dbReference>
<dbReference type="CDD" id="cd02846">
    <property type="entry name" value="PAZ_argonaute_like"/>
    <property type="match status" value="1"/>
</dbReference>
<dbReference type="CDD" id="cd04657">
    <property type="entry name" value="Piwi_ago-like"/>
    <property type="match status" value="1"/>
</dbReference>
<dbReference type="FunFam" id="2.170.260.10:FF:000001">
    <property type="entry name" value="Protein argonaute-2"/>
    <property type="match status" value="1"/>
</dbReference>
<dbReference type="FunFam" id="3.30.420.10:FF:000001">
    <property type="entry name" value="Protein argonaute-2"/>
    <property type="match status" value="1"/>
</dbReference>
<dbReference type="FunFam" id="3.40.50.2300:FF:000005">
    <property type="entry name" value="Protein argonaute-2"/>
    <property type="match status" value="1"/>
</dbReference>
<dbReference type="Gene3D" id="3.40.50.2300">
    <property type="match status" value="1"/>
</dbReference>
<dbReference type="Gene3D" id="2.170.260.10">
    <property type="entry name" value="paz domain"/>
    <property type="match status" value="1"/>
</dbReference>
<dbReference type="Gene3D" id="3.30.420.10">
    <property type="entry name" value="Ribonuclease H-like superfamily/Ribonuclease H"/>
    <property type="match status" value="1"/>
</dbReference>
<dbReference type="HAMAP" id="MF_03033">
    <property type="entry name" value="AGO4"/>
    <property type="match status" value="1"/>
</dbReference>
<dbReference type="InterPro" id="IPR028604">
    <property type="entry name" value="AGO4"/>
</dbReference>
<dbReference type="InterPro" id="IPR014811">
    <property type="entry name" value="ArgoL1"/>
</dbReference>
<dbReference type="InterPro" id="IPR032472">
    <property type="entry name" value="ArgoL2"/>
</dbReference>
<dbReference type="InterPro" id="IPR032473">
    <property type="entry name" value="Argonaute_Mid_dom"/>
</dbReference>
<dbReference type="InterPro" id="IPR032474">
    <property type="entry name" value="Argonaute_N"/>
</dbReference>
<dbReference type="InterPro" id="IPR003100">
    <property type="entry name" value="PAZ_dom"/>
</dbReference>
<dbReference type="InterPro" id="IPR036085">
    <property type="entry name" value="PAZ_dom_sf"/>
</dbReference>
<dbReference type="InterPro" id="IPR003165">
    <property type="entry name" value="Piwi"/>
</dbReference>
<dbReference type="InterPro" id="IPR045246">
    <property type="entry name" value="Piwi_ago-like"/>
</dbReference>
<dbReference type="InterPro" id="IPR012337">
    <property type="entry name" value="RNaseH-like_sf"/>
</dbReference>
<dbReference type="InterPro" id="IPR036397">
    <property type="entry name" value="RNaseH_sf"/>
</dbReference>
<dbReference type="PANTHER" id="PTHR22891">
    <property type="entry name" value="EUKARYOTIC TRANSLATION INITIATION FACTOR 2C"/>
    <property type="match status" value="1"/>
</dbReference>
<dbReference type="Pfam" id="PF08699">
    <property type="entry name" value="ArgoL1"/>
    <property type="match status" value="1"/>
</dbReference>
<dbReference type="Pfam" id="PF16488">
    <property type="entry name" value="ArgoL2"/>
    <property type="match status" value="1"/>
</dbReference>
<dbReference type="Pfam" id="PF16487">
    <property type="entry name" value="ArgoMid"/>
    <property type="match status" value="1"/>
</dbReference>
<dbReference type="Pfam" id="PF16486">
    <property type="entry name" value="ArgoN"/>
    <property type="match status" value="1"/>
</dbReference>
<dbReference type="Pfam" id="PF02170">
    <property type="entry name" value="PAZ"/>
    <property type="match status" value="1"/>
</dbReference>
<dbReference type="Pfam" id="PF02171">
    <property type="entry name" value="Piwi"/>
    <property type="match status" value="1"/>
</dbReference>
<dbReference type="SMART" id="SM01163">
    <property type="entry name" value="DUF1785"/>
    <property type="match status" value="1"/>
</dbReference>
<dbReference type="SMART" id="SM00949">
    <property type="entry name" value="PAZ"/>
    <property type="match status" value="1"/>
</dbReference>
<dbReference type="SMART" id="SM00950">
    <property type="entry name" value="Piwi"/>
    <property type="match status" value="1"/>
</dbReference>
<dbReference type="SUPFAM" id="SSF101690">
    <property type="entry name" value="PAZ domain"/>
    <property type="match status" value="1"/>
</dbReference>
<dbReference type="SUPFAM" id="SSF53098">
    <property type="entry name" value="Ribonuclease H-like"/>
    <property type="match status" value="1"/>
</dbReference>
<dbReference type="PROSITE" id="PS50821">
    <property type="entry name" value="PAZ"/>
    <property type="match status" value="1"/>
</dbReference>
<dbReference type="PROSITE" id="PS50822">
    <property type="entry name" value="PIWI"/>
    <property type="match status" value="1"/>
</dbReference>
<protein>
    <recommendedName>
        <fullName evidence="1">Protein argonaute-4</fullName>
        <shortName evidence="1">Argonaute4</shortName>
    </recommendedName>
    <alternativeName>
        <fullName>Argonaute RISC catalytic component 4</fullName>
    </alternativeName>
    <alternativeName>
        <fullName evidence="1">Eukaryotic translation initiation factor 2C 4</fullName>
        <shortName evidence="1">eIF-2C 4</shortName>
        <shortName evidence="1">eIF2C 4</shortName>
    </alternativeName>
</protein>
<accession>Q5ZMW0</accession>
<evidence type="ECO:0000255" key="1">
    <source>
        <dbReference type="HAMAP-Rule" id="MF_03033"/>
    </source>
</evidence>
<evidence type="ECO:0000255" key="2">
    <source>
        <dbReference type="PROSITE-ProRule" id="PRU00142"/>
    </source>
</evidence>
<evidence type="ECO:0000256" key="3">
    <source>
        <dbReference type="SAM" id="MobiDB-lite"/>
    </source>
</evidence>
<proteinExistence type="evidence at transcript level"/>
<reference key="1">
    <citation type="journal article" date="2005" name="Genome Biol.">
        <title>Full-length cDNAs from chicken bursal lymphocytes to facilitate gene function analysis.</title>
        <authorList>
            <person name="Caldwell R.B."/>
            <person name="Kierzek A.M."/>
            <person name="Arakawa H."/>
            <person name="Bezzubov Y."/>
            <person name="Zaim J."/>
            <person name="Fiedler P."/>
            <person name="Kutter S."/>
            <person name="Blagodatski A."/>
            <person name="Kostovska D."/>
            <person name="Koter M."/>
            <person name="Plachy J."/>
            <person name="Carninci P."/>
            <person name="Hayashizaki Y."/>
            <person name="Buerstedde J.-M."/>
        </authorList>
    </citation>
    <scope>NUCLEOTIDE SEQUENCE [LARGE SCALE MRNA]</scope>
    <source>
        <strain>CB</strain>
        <tissue>Bursa of Fabricius</tissue>
    </source>
</reference>